<feature type="chain" id="PRO_0000384421" description="Probable serine/threonine-protein kinase CHK1 homolog">
    <location>
        <begin position="1"/>
        <end position="414"/>
    </location>
</feature>
<feature type="domain" description="Protein kinase" evidence="2">
    <location>
        <begin position="4"/>
        <end position="255"/>
    </location>
</feature>
<feature type="region of interest" description="Disordered" evidence="4">
    <location>
        <begin position="291"/>
        <end position="310"/>
    </location>
</feature>
<feature type="active site" description="Proton acceptor" evidence="2 3">
    <location>
        <position position="121"/>
    </location>
</feature>
<feature type="binding site" evidence="2">
    <location>
        <begin position="10"/>
        <end position="18"/>
    </location>
    <ligand>
        <name>ATP</name>
        <dbReference type="ChEBI" id="CHEBI:30616"/>
    </ligand>
</feature>
<feature type="binding site" evidence="2">
    <location>
        <position position="32"/>
    </location>
    <ligand>
        <name>ATP</name>
        <dbReference type="ChEBI" id="CHEBI:30616"/>
    </ligand>
</feature>
<keyword id="KW-0067">ATP-binding</keyword>
<keyword id="KW-0418">Kinase</keyword>
<keyword id="KW-0547">Nucleotide-binding</keyword>
<keyword id="KW-0539">Nucleus</keyword>
<keyword id="KW-1185">Reference proteome</keyword>
<keyword id="KW-0723">Serine/threonine-protein kinase</keyword>
<keyword id="KW-0808">Transferase</keyword>
<sequence length="414" mass="46023">MPKYELQETLASGSTSKVKRAAAPGNAKCVVKVIRKKDVPLRVFLREVKIHRSLRHPNIVGFVDSYEDCHGYCIVMKLGCGEVGSMIRAGGGLDPLLAHFYFRQLVSAVEYLHGKCICHRDIKPENMLIDSAGNLLLSDFGFSTVFFHKGRRRRLRSPAGSLEYMAPEVFEGAYDGELADVWSCGVSLVVFLTGALPWDRAVESDERFSAFVSSRGGCQVPLSSIGDQAMGLVMRMTAKEDRRPSVSTVMKDPWVMQPNELLDESGLCRDSCRLFSLVPRQTGSALHFTQPGEVHKTPRTRPVSSQPRRAGSGDICRVYIGEESLRLALRRVCEALDGMVVSHRIAKEHVMFSTVDSRRSVLSGEVGVIRLDEGCCMTIRRAKGDPQEFKRFTRVLAESLGCNGRKCTILYNEI</sequence>
<dbReference type="EC" id="2.7.11.1"/>
<dbReference type="EMBL" id="AL590443">
    <property type="protein sequence ID" value="CAD26208.1"/>
    <property type="molecule type" value="Genomic_DNA"/>
</dbReference>
<dbReference type="RefSeq" id="NP_597573.1">
    <property type="nucleotide sequence ID" value="NM_001040937.1"/>
</dbReference>
<dbReference type="SMR" id="Q8SSA8"/>
<dbReference type="FunCoup" id="Q8SSA8">
    <property type="interactions" value="163"/>
</dbReference>
<dbReference type="STRING" id="284813.Q8SSA8"/>
<dbReference type="GeneID" id="858735"/>
<dbReference type="KEGG" id="ecu:ECU03_0620"/>
<dbReference type="VEuPathDB" id="MicrosporidiaDB:ECU03_0620"/>
<dbReference type="HOGENOM" id="CLU_000288_59_8_1"/>
<dbReference type="InParanoid" id="Q8SSA8"/>
<dbReference type="OMA" id="DICHLYL"/>
<dbReference type="OrthoDB" id="539158at2759"/>
<dbReference type="Proteomes" id="UP000000819">
    <property type="component" value="Chromosome III"/>
</dbReference>
<dbReference type="GO" id="GO:0005737">
    <property type="term" value="C:cytoplasm"/>
    <property type="evidence" value="ECO:0007669"/>
    <property type="project" value="TreeGrafter"/>
</dbReference>
<dbReference type="GO" id="GO:0005634">
    <property type="term" value="C:nucleus"/>
    <property type="evidence" value="ECO:0007669"/>
    <property type="project" value="UniProtKB-SubCell"/>
</dbReference>
<dbReference type="GO" id="GO:0005524">
    <property type="term" value="F:ATP binding"/>
    <property type="evidence" value="ECO:0007669"/>
    <property type="project" value="UniProtKB-KW"/>
</dbReference>
<dbReference type="GO" id="GO:0106310">
    <property type="term" value="F:protein serine kinase activity"/>
    <property type="evidence" value="ECO:0007669"/>
    <property type="project" value="RHEA"/>
</dbReference>
<dbReference type="GO" id="GO:0004674">
    <property type="term" value="F:protein serine/threonine kinase activity"/>
    <property type="evidence" value="ECO:0007669"/>
    <property type="project" value="UniProtKB-KW"/>
</dbReference>
<dbReference type="GO" id="GO:0035556">
    <property type="term" value="P:intracellular signal transduction"/>
    <property type="evidence" value="ECO:0007669"/>
    <property type="project" value="TreeGrafter"/>
</dbReference>
<dbReference type="Gene3D" id="1.10.510.10">
    <property type="entry name" value="Transferase(Phosphotransferase) domain 1"/>
    <property type="match status" value="1"/>
</dbReference>
<dbReference type="InterPro" id="IPR011009">
    <property type="entry name" value="Kinase-like_dom_sf"/>
</dbReference>
<dbReference type="InterPro" id="IPR000719">
    <property type="entry name" value="Prot_kinase_dom"/>
</dbReference>
<dbReference type="InterPro" id="IPR008271">
    <property type="entry name" value="Ser/Thr_kinase_AS"/>
</dbReference>
<dbReference type="PANTHER" id="PTHR24346:SF82">
    <property type="entry name" value="KP78A-RELATED"/>
    <property type="match status" value="1"/>
</dbReference>
<dbReference type="PANTHER" id="PTHR24346">
    <property type="entry name" value="MAP/MICROTUBULE AFFINITY-REGULATING KINASE"/>
    <property type="match status" value="1"/>
</dbReference>
<dbReference type="Pfam" id="PF00069">
    <property type="entry name" value="Pkinase"/>
    <property type="match status" value="1"/>
</dbReference>
<dbReference type="SMART" id="SM00220">
    <property type="entry name" value="S_TKc"/>
    <property type="match status" value="1"/>
</dbReference>
<dbReference type="SUPFAM" id="SSF56112">
    <property type="entry name" value="Protein kinase-like (PK-like)"/>
    <property type="match status" value="1"/>
</dbReference>
<dbReference type="PROSITE" id="PS50011">
    <property type="entry name" value="PROTEIN_KINASE_DOM"/>
    <property type="match status" value="1"/>
</dbReference>
<dbReference type="PROSITE" id="PS00108">
    <property type="entry name" value="PROTEIN_KINASE_ST"/>
    <property type="match status" value="1"/>
</dbReference>
<proteinExistence type="inferred from homology"/>
<organism>
    <name type="scientific">Encephalitozoon cuniculi (strain GB-M1)</name>
    <name type="common">Microsporidian parasite</name>
    <dbReference type="NCBI Taxonomy" id="284813"/>
    <lineage>
        <taxon>Eukaryota</taxon>
        <taxon>Fungi</taxon>
        <taxon>Fungi incertae sedis</taxon>
        <taxon>Microsporidia</taxon>
        <taxon>Unikaryonidae</taxon>
        <taxon>Encephalitozoon</taxon>
    </lineage>
</organism>
<evidence type="ECO:0000250" key="1"/>
<evidence type="ECO:0000255" key="2">
    <source>
        <dbReference type="PROSITE-ProRule" id="PRU00159"/>
    </source>
</evidence>
<evidence type="ECO:0000255" key="3">
    <source>
        <dbReference type="PROSITE-ProRule" id="PRU10027"/>
    </source>
</evidence>
<evidence type="ECO:0000256" key="4">
    <source>
        <dbReference type="SAM" id="MobiDB-lite"/>
    </source>
</evidence>
<evidence type="ECO:0000305" key="5"/>
<gene>
    <name type="primary">CHK1</name>
    <name type="ordered locus">ECU03_0620</name>
</gene>
<accession>Q8SSA8</accession>
<reference key="1">
    <citation type="journal article" date="2001" name="Nature">
        <title>Genome sequence and gene compaction of the eukaryote parasite Encephalitozoon cuniculi.</title>
        <authorList>
            <person name="Katinka M.D."/>
            <person name="Duprat S."/>
            <person name="Cornillot E."/>
            <person name="Metenier G."/>
            <person name="Thomarat F."/>
            <person name="Prensier G."/>
            <person name="Barbe V."/>
            <person name="Peyretaillade E."/>
            <person name="Brottier P."/>
            <person name="Wincker P."/>
            <person name="Delbac F."/>
            <person name="El Alaoui H."/>
            <person name="Peyret P."/>
            <person name="Saurin W."/>
            <person name="Gouy M."/>
            <person name="Weissenbach J."/>
            <person name="Vivares C.P."/>
        </authorList>
    </citation>
    <scope>NUCLEOTIDE SEQUENCE [LARGE SCALE GENOMIC DNA]</scope>
    <source>
        <strain>GB-M1</strain>
    </source>
</reference>
<reference key="2">
    <citation type="journal article" date="2007" name="BMC Genomics">
        <title>The complement of protein kinases of the microsporidium Encephalitozoon cuniculi in relation to those of Saccharomyces cerevisiae and Schizosaccharomyces pombe.</title>
        <authorList>
            <person name="Miranda-Saavedra D."/>
            <person name="Stark M.J.R."/>
            <person name="Packer J.C."/>
            <person name="Vivares C.P."/>
            <person name="Doerig C."/>
            <person name="Barton G.J."/>
        </authorList>
    </citation>
    <scope>PREDICTION OF FUNCTION</scope>
</reference>
<comment type="function">
    <text evidence="1">Serine/threonine-protein kinase which is required for checkpoint-mediated cell cycle arrest and activation of DNA repair in response to the presence of DNA damage or unreplicated DNA. May also negatively regulate cell cycle progression during unperturbed cell cycles (By similarity).</text>
</comment>
<comment type="catalytic activity">
    <reaction>
        <text>L-seryl-[protein] + ATP = O-phospho-L-seryl-[protein] + ADP + H(+)</text>
        <dbReference type="Rhea" id="RHEA:17989"/>
        <dbReference type="Rhea" id="RHEA-COMP:9863"/>
        <dbReference type="Rhea" id="RHEA-COMP:11604"/>
        <dbReference type="ChEBI" id="CHEBI:15378"/>
        <dbReference type="ChEBI" id="CHEBI:29999"/>
        <dbReference type="ChEBI" id="CHEBI:30616"/>
        <dbReference type="ChEBI" id="CHEBI:83421"/>
        <dbReference type="ChEBI" id="CHEBI:456216"/>
        <dbReference type="EC" id="2.7.11.1"/>
    </reaction>
</comment>
<comment type="catalytic activity">
    <reaction>
        <text>L-threonyl-[protein] + ATP = O-phospho-L-threonyl-[protein] + ADP + H(+)</text>
        <dbReference type="Rhea" id="RHEA:46608"/>
        <dbReference type="Rhea" id="RHEA-COMP:11060"/>
        <dbReference type="Rhea" id="RHEA-COMP:11605"/>
        <dbReference type="ChEBI" id="CHEBI:15378"/>
        <dbReference type="ChEBI" id="CHEBI:30013"/>
        <dbReference type="ChEBI" id="CHEBI:30616"/>
        <dbReference type="ChEBI" id="CHEBI:61977"/>
        <dbReference type="ChEBI" id="CHEBI:456216"/>
        <dbReference type="EC" id="2.7.11.1"/>
    </reaction>
</comment>
<comment type="subcellular location">
    <subcellularLocation>
        <location evidence="1">Nucleus</location>
    </subcellularLocation>
</comment>
<comment type="similarity">
    <text evidence="5">Belongs to the protein kinase superfamily. CAMK Ser/Thr protein kinase family. NIM1 subfamily.</text>
</comment>
<protein>
    <recommendedName>
        <fullName>Probable serine/threonine-protein kinase CHK1 homolog</fullName>
        <ecNumber>2.7.11.1</ecNumber>
    </recommendedName>
</protein>
<name>CHK1_ENCCU</name>